<keyword id="KW-0150">Chloroplast</keyword>
<keyword id="KW-0201">Cytochrome c-type biogenesis</keyword>
<keyword id="KW-0472">Membrane</keyword>
<keyword id="KW-0934">Plastid</keyword>
<keyword id="KW-1185">Reference proteome</keyword>
<keyword id="KW-0793">Thylakoid</keyword>
<keyword id="KW-0812">Transmembrane</keyword>
<keyword id="KW-1133">Transmembrane helix</keyword>
<accession>P0C377</accession>
<accession>P12215</accession>
<accession>Q6QXR2</accession>
<accession>Q6QY38</accession>
<name>CCSA_ORYSJ</name>
<reference key="1">
    <citation type="journal article" date="1989" name="Mol. Gen. Genet.">
        <title>The complete sequence of the rice (Oryza sativa) chloroplast genome: intermolecular recombination between distinct tRNA genes accounts for a major plastid DNA inversion during the evolution of the cereals.</title>
        <authorList>
            <person name="Hiratsuka J."/>
            <person name="Shimada H."/>
            <person name="Whittier R."/>
            <person name="Ishibashi T."/>
            <person name="Sakamoto M."/>
            <person name="Mori M."/>
            <person name="Kondo C."/>
            <person name="Honji Y."/>
            <person name="Sun C.-R."/>
            <person name="Meng B.-Y."/>
            <person name="Li Y.-Q."/>
            <person name="Kanno A."/>
            <person name="Nishizawa Y."/>
            <person name="Hirai A."/>
            <person name="Shinozaki K."/>
            <person name="Sugiura M."/>
        </authorList>
    </citation>
    <scope>NUCLEOTIDE SEQUENCE [LARGE SCALE GENOMIC DNA]</scope>
    <source>
        <strain>cv. Nipponbare</strain>
    </source>
</reference>
<reference key="2">
    <citation type="journal article" date="2004" name="Plant Physiol.">
        <title>A comparison of rice chloroplast genomes.</title>
        <authorList>
            <person name="Tang J."/>
            <person name="Xia H."/>
            <person name="Cao M."/>
            <person name="Zhang X."/>
            <person name="Zeng W."/>
            <person name="Hu S."/>
            <person name="Tong W."/>
            <person name="Wang J."/>
            <person name="Wang J."/>
            <person name="Yu J."/>
            <person name="Yang H."/>
            <person name="Zhu L."/>
        </authorList>
    </citation>
    <scope>NUCLEOTIDE SEQUENCE [LARGE SCALE GENOMIC DNA]</scope>
    <source>
        <strain>cv. Nipponbare</strain>
    </source>
</reference>
<gene>
    <name evidence="1" type="primary">ccsA</name>
    <name type="ordered locus">LOC_Osp1g00900</name>
    <name type="ORF">Nip168</name>
</gene>
<geneLocation type="chloroplast"/>
<comment type="function">
    <text evidence="1">Required during biogenesis of c-type cytochromes (cytochrome c6 and cytochrome f) at the step of heme attachment.</text>
</comment>
<comment type="subunit">
    <text evidence="1">May interact with Ccs1.</text>
</comment>
<comment type="subcellular location">
    <subcellularLocation>
        <location evidence="1">Plastid</location>
        <location evidence="1">Chloroplast thylakoid membrane</location>
        <topology evidence="1">Multi-pass membrane protein</topology>
    </subcellularLocation>
</comment>
<comment type="similarity">
    <text evidence="1">Belongs to the CcmF/CycK/Ccl1/NrfE/CcsA family.</text>
</comment>
<comment type="sequence caution" evidence="2">
    <conflict type="erroneous initiation">
        <sequence resource="EMBL-CDS" id="AAS46156"/>
    </conflict>
    <text>Truncated N-terminus.</text>
</comment>
<organism>
    <name type="scientific">Oryza sativa subsp. japonica</name>
    <name type="common">Rice</name>
    <dbReference type="NCBI Taxonomy" id="39947"/>
    <lineage>
        <taxon>Eukaryota</taxon>
        <taxon>Viridiplantae</taxon>
        <taxon>Streptophyta</taxon>
        <taxon>Embryophyta</taxon>
        <taxon>Tracheophyta</taxon>
        <taxon>Spermatophyta</taxon>
        <taxon>Magnoliopsida</taxon>
        <taxon>Liliopsida</taxon>
        <taxon>Poales</taxon>
        <taxon>Poaceae</taxon>
        <taxon>BOP clade</taxon>
        <taxon>Oryzoideae</taxon>
        <taxon>Oryzeae</taxon>
        <taxon>Oryzinae</taxon>
        <taxon>Oryza</taxon>
        <taxon>Oryza sativa</taxon>
    </lineage>
</organism>
<sequence>MLFATLEHILTHISFSTISIVITIHLITLLVRELGGLRDSSEKGMIATFFCITGFLVSRWASSGHFPLSNLYESLIFLSWALYILHMIPKIQNSKNDLSTITTPSTILTQGFATSGLLTEMHQSTILVPALQSQWLMMHVSMMLLSYATLLCGSLLSAALLMIRFRKNLDFFSKKKKNVLSKTFFFNEIEYFYAKRSALKSTFFPLFPNYYKYQLIERLDSWSYRVISLGFTLLTIGILCGAVWANEAWGSYWNWDPKETWAFITWTIFAIYLHSRTNPNWKGTKSAFVASIGFLIIWICYFGINLLGIGLHSYGSFTLPI</sequence>
<dbReference type="EMBL" id="X15901">
    <property type="protein sequence ID" value="CAA33952.1"/>
    <property type="molecule type" value="Genomic_DNA"/>
</dbReference>
<dbReference type="EMBL" id="AY522330">
    <property type="protein sequence ID" value="AAS46156.1"/>
    <property type="status" value="ALT_INIT"/>
    <property type="molecule type" value="Genomic_DNA"/>
</dbReference>
<dbReference type="PIR" id="JQ0288">
    <property type="entry name" value="JQ0288"/>
</dbReference>
<dbReference type="RefSeq" id="NP_039443.1">
    <property type="nucleotide sequence ID" value="NC_001320.1"/>
</dbReference>
<dbReference type="SMR" id="P0C377"/>
<dbReference type="FunCoup" id="P0C377">
    <property type="interactions" value="28"/>
</dbReference>
<dbReference type="STRING" id="39947.P0C377"/>
<dbReference type="PaxDb" id="39947-P0C377"/>
<dbReference type="GeneID" id="3131487"/>
<dbReference type="KEGG" id="dosa:CAA33952.1"/>
<dbReference type="KEGG" id="osa:3131487"/>
<dbReference type="InParanoid" id="P0C377"/>
<dbReference type="OrthoDB" id="760839at2759"/>
<dbReference type="Proteomes" id="UP000059680">
    <property type="component" value="Chloroplast"/>
</dbReference>
<dbReference type="GO" id="GO:0009535">
    <property type="term" value="C:chloroplast thylakoid membrane"/>
    <property type="evidence" value="ECO:0007669"/>
    <property type="project" value="UniProtKB-SubCell"/>
</dbReference>
<dbReference type="GO" id="GO:0009536">
    <property type="term" value="C:plastid"/>
    <property type="evidence" value="ECO:0000305"/>
    <property type="project" value="Gramene"/>
</dbReference>
<dbReference type="GO" id="GO:0020037">
    <property type="term" value="F:heme binding"/>
    <property type="evidence" value="ECO:0007669"/>
    <property type="project" value="InterPro"/>
</dbReference>
<dbReference type="GO" id="GO:0017004">
    <property type="term" value="P:cytochrome complex assembly"/>
    <property type="evidence" value="ECO:0007669"/>
    <property type="project" value="UniProtKB-UniRule"/>
</dbReference>
<dbReference type="HAMAP" id="MF_01391">
    <property type="entry name" value="CytC_CcsA"/>
    <property type="match status" value="1"/>
</dbReference>
<dbReference type="InterPro" id="IPR002541">
    <property type="entry name" value="Cyt_c_assembly"/>
</dbReference>
<dbReference type="InterPro" id="IPR017562">
    <property type="entry name" value="Cyt_c_biogenesis_CcsA"/>
</dbReference>
<dbReference type="InterPro" id="IPR045062">
    <property type="entry name" value="Cyt_c_biogenesis_CcsA/CcmC"/>
</dbReference>
<dbReference type="NCBIfam" id="TIGR03144">
    <property type="entry name" value="cytochr_II_ccsB"/>
    <property type="match status" value="1"/>
</dbReference>
<dbReference type="PANTHER" id="PTHR30071:SF1">
    <property type="entry name" value="CYTOCHROME B_B6 PROTEIN-RELATED"/>
    <property type="match status" value="1"/>
</dbReference>
<dbReference type="PANTHER" id="PTHR30071">
    <property type="entry name" value="HEME EXPORTER PROTEIN C"/>
    <property type="match status" value="1"/>
</dbReference>
<dbReference type="Pfam" id="PF01578">
    <property type="entry name" value="Cytochrom_C_asm"/>
    <property type="match status" value="1"/>
</dbReference>
<feature type="chain" id="PRO_0000289029" description="Cytochrome c biogenesis protein CcsA">
    <location>
        <begin position="1"/>
        <end position="321"/>
    </location>
</feature>
<feature type="transmembrane region" description="Helical" evidence="1">
    <location>
        <begin position="9"/>
        <end position="29"/>
    </location>
</feature>
<feature type="transmembrane region" description="Helical" evidence="1">
    <location>
        <begin position="44"/>
        <end position="64"/>
    </location>
</feature>
<feature type="transmembrane region" description="Helical" evidence="1">
    <location>
        <begin position="68"/>
        <end position="88"/>
    </location>
</feature>
<feature type="transmembrane region" description="Helical" evidence="1">
    <location>
        <begin position="143"/>
        <end position="163"/>
    </location>
</feature>
<feature type="transmembrane region" description="Helical" evidence="1">
    <location>
        <begin position="226"/>
        <end position="246"/>
    </location>
</feature>
<feature type="transmembrane region" description="Helical" evidence="1">
    <location>
        <begin position="260"/>
        <end position="274"/>
    </location>
</feature>
<feature type="transmembrane region" description="Helical" evidence="1">
    <location>
        <begin position="289"/>
        <end position="309"/>
    </location>
</feature>
<protein>
    <recommendedName>
        <fullName evidence="1">Cytochrome c biogenesis protein CcsA</fullName>
    </recommendedName>
</protein>
<proteinExistence type="inferred from homology"/>
<evidence type="ECO:0000255" key="1">
    <source>
        <dbReference type="HAMAP-Rule" id="MF_01391"/>
    </source>
</evidence>
<evidence type="ECO:0000305" key="2"/>